<feature type="chain" id="PRO_1000040577" description="GTP cyclohydrolase-2">
    <location>
        <begin position="1"/>
        <end position="200"/>
    </location>
</feature>
<feature type="active site" description="Proton acceptor" evidence="1">
    <location>
        <position position="126"/>
    </location>
</feature>
<feature type="active site" description="Nucleophile" evidence="1">
    <location>
        <position position="128"/>
    </location>
</feature>
<feature type="binding site" evidence="1">
    <location>
        <begin position="49"/>
        <end position="53"/>
    </location>
    <ligand>
        <name>GTP</name>
        <dbReference type="ChEBI" id="CHEBI:37565"/>
    </ligand>
</feature>
<feature type="binding site" evidence="1">
    <location>
        <position position="54"/>
    </location>
    <ligand>
        <name>Zn(2+)</name>
        <dbReference type="ChEBI" id="CHEBI:29105"/>
        <note>catalytic</note>
    </ligand>
</feature>
<feature type="binding site" evidence="1">
    <location>
        <position position="65"/>
    </location>
    <ligand>
        <name>Zn(2+)</name>
        <dbReference type="ChEBI" id="CHEBI:29105"/>
        <note>catalytic</note>
    </ligand>
</feature>
<feature type="binding site" evidence="1">
    <location>
        <position position="67"/>
    </location>
    <ligand>
        <name>Zn(2+)</name>
        <dbReference type="ChEBI" id="CHEBI:29105"/>
        <note>catalytic</note>
    </ligand>
</feature>
<feature type="binding site" evidence="1">
    <location>
        <position position="70"/>
    </location>
    <ligand>
        <name>GTP</name>
        <dbReference type="ChEBI" id="CHEBI:37565"/>
    </ligand>
</feature>
<feature type="binding site" evidence="1">
    <location>
        <begin position="92"/>
        <end position="94"/>
    </location>
    <ligand>
        <name>GTP</name>
        <dbReference type="ChEBI" id="CHEBI:37565"/>
    </ligand>
</feature>
<feature type="binding site" evidence="1">
    <location>
        <position position="114"/>
    </location>
    <ligand>
        <name>GTP</name>
        <dbReference type="ChEBI" id="CHEBI:37565"/>
    </ligand>
</feature>
<feature type="binding site" evidence="1">
    <location>
        <position position="149"/>
    </location>
    <ligand>
        <name>GTP</name>
        <dbReference type="ChEBI" id="CHEBI:37565"/>
    </ligand>
</feature>
<feature type="binding site" evidence="1">
    <location>
        <position position="154"/>
    </location>
    <ligand>
        <name>GTP</name>
        <dbReference type="ChEBI" id="CHEBI:37565"/>
    </ligand>
</feature>
<organism>
    <name type="scientific">Saccharophagus degradans (strain 2-40 / ATCC 43961 / DSM 17024)</name>
    <dbReference type="NCBI Taxonomy" id="203122"/>
    <lineage>
        <taxon>Bacteria</taxon>
        <taxon>Pseudomonadati</taxon>
        <taxon>Pseudomonadota</taxon>
        <taxon>Gammaproteobacteria</taxon>
        <taxon>Cellvibrionales</taxon>
        <taxon>Cellvibrionaceae</taxon>
        <taxon>Saccharophagus</taxon>
    </lineage>
</organism>
<evidence type="ECO:0000255" key="1">
    <source>
        <dbReference type="HAMAP-Rule" id="MF_00179"/>
    </source>
</evidence>
<keyword id="KW-0342">GTP-binding</keyword>
<keyword id="KW-0378">Hydrolase</keyword>
<keyword id="KW-0479">Metal-binding</keyword>
<keyword id="KW-0547">Nucleotide-binding</keyword>
<keyword id="KW-1185">Reference proteome</keyword>
<keyword id="KW-0686">Riboflavin biosynthesis</keyword>
<keyword id="KW-0862">Zinc</keyword>
<dbReference type="EC" id="3.5.4.25" evidence="1"/>
<dbReference type="EMBL" id="CP000282">
    <property type="protein sequence ID" value="ABD82705.1"/>
    <property type="molecule type" value="Genomic_DNA"/>
</dbReference>
<dbReference type="RefSeq" id="WP_011469921.1">
    <property type="nucleotide sequence ID" value="NC_007912.1"/>
</dbReference>
<dbReference type="SMR" id="Q21F24"/>
<dbReference type="STRING" id="203122.Sde_3450"/>
<dbReference type="GeneID" id="98615065"/>
<dbReference type="KEGG" id="sde:Sde_3450"/>
<dbReference type="eggNOG" id="COG0807">
    <property type="taxonomic scope" value="Bacteria"/>
</dbReference>
<dbReference type="HOGENOM" id="CLU_020273_2_1_6"/>
<dbReference type="OrthoDB" id="9793111at2"/>
<dbReference type="UniPathway" id="UPA00275">
    <property type="reaction ID" value="UER00400"/>
</dbReference>
<dbReference type="Proteomes" id="UP000001947">
    <property type="component" value="Chromosome"/>
</dbReference>
<dbReference type="GO" id="GO:0005829">
    <property type="term" value="C:cytosol"/>
    <property type="evidence" value="ECO:0007669"/>
    <property type="project" value="TreeGrafter"/>
</dbReference>
<dbReference type="GO" id="GO:0005525">
    <property type="term" value="F:GTP binding"/>
    <property type="evidence" value="ECO:0007669"/>
    <property type="project" value="UniProtKB-KW"/>
</dbReference>
<dbReference type="GO" id="GO:0003935">
    <property type="term" value="F:GTP cyclohydrolase II activity"/>
    <property type="evidence" value="ECO:0007669"/>
    <property type="project" value="UniProtKB-UniRule"/>
</dbReference>
<dbReference type="GO" id="GO:0008270">
    <property type="term" value="F:zinc ion binding"/>
    <property type="evidence" value="ECO:0007669"/>
    <property type="project" value="UniProtKB-UniRule"/>
</dbReference>
<dbReference type="GO" id="GO:0009231">
    <property type="term" value="P:riboflavin biosynthetic process"/>
    <property type="evidence" value="ECO:0007669"/>
    <property type="project" value="UniProtKB-UniRule"/>
</dbReference>
<dbReference type="CDD" id="cd00641">
    <property type="entry name" value="GTP_cyclohydro2"/>
    <property type="match status" value="1"/>
</dbReference>
<dbReference type="FunFam" id="3.40.50.10990:FF:000002">
    <property type="entry name" value="GTP cyclohydrolase-2"/>
    <property type="match status" value="1"/>
</dbReference>
<dbReference type="Gene3D" id="3.40.50.10990">
    <property type="entry name" value="GTP cyclohydrolase II"/>
    <property type="match status" value="1"/>
</dbReference>
<dbReference type="HAMAP" id="MF_00179">
    <property type="entry name" value="RibA"/>
    <property type="match status" value="1"/>
</dbReference>
<dbReference type="InterPro" id="IPR032677">
    <property type="entry name" value="GTP_cyclohydro_II"/>
</dbReference>
<dbReference type="InterPro" id="IPR000926">
    <property type="entry name" value="RibA"/>
</dbReference>
<dbReference type="InterPro" id="IPR036144">
    <property type="entry name" value="RibA-like_sf"/>
</dbReference>
<dbReference type="NCBIfam" id="NF001591">
    <property type="entry name" value="PRK00393.1"/>
    <property type="match status" value="1"/>
</dbReference>
<dbReference type="NCBIfam" id="TIGR00505">
    <property type="entry name" value="ribA"/>
    <property type="match status" value="1"/>
</dbReference>
<dbReference type="PANTHER" id="PTHR21327:SF18">
    <property type="entry name" value="3,4-DIHYDROXY-2-BUTANONE 4-PHOSPHATE SYNTHASE"/>
    <property type="match status" value="1"/>
</dbReference>
<dbReference type="PANTHER" id="PTHR21327">
    <property type="entry name" value="GTP CYCLOHYDROLASE II-RELATED"/>
    <property type="match status" value="1"/>
</dbReference>
<dbReference type="Pfam" id="PF00925">
    <property type="entry name" value="GTP_cyclohydro2"/>
    <property type="match status" value="1"/>
</dbReference>
<dbReference type="SUPFAM" id="SSF142695">
    <property type="entry name" value="RibA-like"/>
    <property type="match status" value="1"/>
</dbReference>
<reference key="1">
    <citation type="journal article" date="2008" name="PLoS Genet.">
        <title>Complete genome sequence of the complex carbohydrate-degrading marine bacterium, Saccharophagus degradans strain 2-40 T.</title>
        <authorList>
            <person name="Weiner R.M."/>
            <person name="Taylor L.E. II"/>
            <person name="Henrissat B."/>
            <person name="Hauser L."/>
            <person name="Land M."/>
            <person name="Coutinho P.M."/>
            <person name="Rancurel C."/>
            <person name="Saunders E.H."/>
            <person name="Longmire A.G."/>
            <person name="Zhang H."/>
            <person name="Bayer E.A."/>
            <person name="Gilbert H.J."/>
            <person name="Larimer F."/>
            <person name="Zhulin I.B."/>
            <person name="Ekborg N.A."/>
            <person name="Lamed R."/>
            <person name="Richardson P.M."/>
            <person name="Borovok I."/>
            <person name="Hutcheson S."/>
        </authorList>
    </citation>
    <scope>NUCLEOTIDE SEQUENCE [LARGE SCALE GENOMIC DNA]</scope>
    <source>
        <strain>2-40 / ATCC 43961 / DSM 17024</strain>
    </source>
</reference>
<sequence length="200" mass="22201">MTVKYVESSKLPTPMGMFAMHGFSDDSSDKEHVVLTMGDVSSEEPVLVRIHSECLTGDALFSLRCDCGAQLQAAMHKIAIEGRGAIFYLRQEGRGIGLLNKIRAYKLQDCGADTVEANERLGFGADMRDYSILKPMFEHLGIAQVKLMTNNPRKIDALTQYGINIVNRIPHETGRNPHNADYLETKKGKLGHMFGEKDGE</sequence>
<accession>Q21F24</accession>
<name>RIBA_SACD2</name>
<comment type="function">
    <text evidence="1">Catalyzes the conversion of GTP to 2,5-diamino-6-ribosylamino-4(3H)-pyrimidinone 5'-phosphate (DARP), formate and pyrophosphate.</text>
</comment>
<comment type="catalytic activity">
    <reaction evidence="1">
        <text>GTP + 4 H2O = 2,5-diamino-6-hydroxy-4-(5-phosphoribosylamino)-pyrimidine + formate + 2 phosphate + 3 H(+)</text>
        <dbReference type="Rhea" id="RHEA:23704"/>
        <dbReference type="ChEBI" id="CHEBI:15377"/>
        <dbReference type="ChEBI" id="CHEBI:15378"/>
        <dbReference type="ChEBI" id="CHEBI:15740"/>
        <dbReference type="ChEBI" id="CHEBI:37565"/>
        <dbReference type="ChEBI" id="CHEBI:43474"/>
        <dbReference type="ChEBI" id="CHEBI:58614"/>
        <dbReference type="EC" id="3.5.4.25"/>
    </reaction>
</comment>
<comment type="cofactor">
    <cofactor evidence="1">
        <name>Zn(2+)</name>
        <dbReference type="ChEBI" id="CHEBI:29105"/>
    </cofactor>
    <text evidence="1">Binds 1 zinc ion per subunit.</text>
</comment>
<comment type="pathway">
    <text evidence="1">Cofactor biosynthesis; riboflavin biosynthesis; 5-amino-6-(D-ribitylamino)uracil from GTP: step 1/4.</text>
</comment>
<comment type="similarity">
    <text evidence="1">Belongs to the GTP cyclohydrolase II family.</text>
</comment>
<gene>
    <name evidence="1" type="primary">ribA</name>
    <name type="ordered locus">Sde_3450</name>
</gene>
<proteinExistence type="inferred from homology"/>
<protein>
    <recommendedName>
        <fullName evidence="1">GTP cyclohydrolase-2</fullName>
        <ecNumber evidence="1">3.5.4.25</ecNumber>
    </recommendedName>
    <alternativeName>
        <fullName evidence="1">GTP cyclohydrolase II</fullName>
    </alternativeName>
</protein>